<reference key="1">
    <citation type="journal article" date="2005" name="Nature">
        <title>The genome of the social amoeba Dictyostelium discoideum.</title>
        <authorList>
            <person name="Eichinger L."/>
            <person name="Pachebat J.A."/>
            <person name="Gloeckner G."/>
            <person name="Rajandream M.A."/>
            <person name="Sucgang R."/>
            <person name="Berriman M."/>
            <person name="Song J."/>
            <person name="Olsen R."/>
            <person name="Szafranski K."/>
            <person name="Xu Q."/>
            <person name="Tunggal B."/>
            <person name="Kummerfeld S."/>
            <person name="Madera M."/>
            <person name="Konfortov B.A."/>
            <person name="Rivero F."/>
            <person name="Bankier A.T."/>
            <person name="Lehmann R."/>
            <person name="Hamlin N."/>
            <person name="Davies R."/>
            <person name="Gaudet P."/>
            <person name="Fey P."/>
            <person name="Pilcher K."/>
            <person name="Chen G."/>
            <person name="Saunders D."/>
            <person name="Sodergren E.J."/>
            <person name="Davis P."/>
            <person name="Kerhornou A."/>
            <person name="Nie X."/>
            <person name="Hall N."/>
            <person name="Anjard C."/>
            <person name="Hemphill L."/>
            <person name="Bason N."/>
            <person name="Farbrother P."/>
            <person name="Desany B."/>
            <person name="Just E."/>
            <person name="Morio T."/>
            <person name="Rost R."/>
            <person name="Churcher C.M."/>
            <person name="Cooper J."/>
            <person name="Haydock S."/>
            <person name="van Driessche N."/>
            <person name="Cronin A."/>
            <person name="Goodhead I."/>
            <person name="Muzny D.M."/>
            <person name="Mourier T."/>
            <person name="Pain A."/>
            <person name="Lu M."/>
            <person name="Harper D."/>
            <person name="Lindsay R."/>
            <person name="Hauser H."/>
            <person name="James K.D."/>
            <person name="Quiles M."/>
            <person name="Madan Babu M."/>
            <person name="Saito T."/>
            <person name="Buchrieser C."/>
            <person name="Wardroper A."/>
            <person name="Felder M."/>
            <person name="Thangavelu M."/>
            <person name="Johnson D."/>
            <person name="Knights A."/>
            <person name="Loulseged H."/>
            <person name="Mungall K.L."/>
            <person name="Oliver K."/>
            <person name="Price C."/>
            <person name="Quail M.A."/>
            <person name="Urushihara H."/>
            <person name="Hernandez J."/>
            <person name="Rabbinowitsch E."/>
            <person name="Steffen D."/>
            <person name="Sanders M."/>
            <person name="Ma J."/>
            <person name="Kohara Y."/>
            <person name="Sharp S."/>
            <person name="Simmonds M.N."/>
            <person name="Spiegler S."/>
            <person name="Tivey A."/>
            <person name="Sugano S."/>
            <person name="White B."/>
            <person name="Walker D."/>
            <person name="Woodward J.R."/>
            <person name="Winckler T."/>
            <person name="Tanaka Y."/>
            <person name="Shaulsky G."/>
            <person name="Schleicher M."/>
            <person name="Weinstock G.M."/>
            <person name="Rosenthal A."/>
            <person name="Cox E.C."/>
            <person name="Chisholm R.L."/>
            <person name="Gibbs R.A."/>
            <person name="Loomis W.F."/>
            <person name="Platzer M."/>
            <person name="Kay R.R."/>
            <person name="Williams J.G."/>
            <person name="Dear P.H."/>
            <person name="Noegel A.A."/>
            <person name="Barrell B.G."/>
            <person name="Kuspa A."/>
        </authorList>
    </citation>
    <scope>NUCLEOTIDE SEQUENCE [LARGE SCALE GENOMIC DNA]</scope>
    <source>
        <strain>AX4</strain>
    </source>
</reference>
<feature type="chain" id="PRO_0000327763" description="Probable Dol-P-Man:Man(5)GlcNAc(2)-PP-Dol alpha-1,3-mannosyltransferase">
    <location>
        <begin position="1"/>
        <end position="446"/>
    </location>
</feature>
<feature type="transmembrane region" description="Helical" evidence="2">
    <location>
        <begin position="17"/>
        <end position="37"/>
    </location>
</feature>
<feature type="transmembrane region" description="Helical" evidence="2">
    <location>
        <begin position="103"/>
        <end position="123"/>
    </location>
</feature>
<feature type="transmembrane region" description="Helical" evidence="2">
    <location>
        <begin position="155"/>
        <end position="175"/>
    </location>
</feature>
<feature type="transmembrane region" description="Helical" evidence="2">
    <location>
        <begin position="177"/>
        <end position="197"/>
    </location>
</feature>
<feature type="transmembrane region" description="Helical" evidence="2">
    <location>
        <begin position="214"/>
        <end position="234"/>
    </location>
</feature>
<feature type="transmembrane region" description="Helical" evidence="2">
    <location>
        <begin position="237"/>
        <end position="257"/>
    </location>
</feature>
<feature type="transmembrane region" description="Helical" evidence="2">
    <location>
        <begin position="294"/>
        <end position="314"/>
    </location>
</feature>
<feature type="transmembrane region" description="Helical" evidence="2">
    <location>
        <begin position="336"/>
        <end position="356"/>
    </location>
</feature>
<feature type="transmembrane region" description="Helical" evidence="2">
    <location>
        <begin position="372"/>
        <end position="392"/>
    </location>
</feature>
<feature type="transmembrane region" description="Helical" evidence="2">
    <location>
        <begin position="407"/>
        <end position="427"/>
    </location>
</feature>
<gene>
    <name type="primary">alg3</name>
    <name type="ORF">DDB_G0268238</name>
</gene>
<proteinExistence type="inferred from homology"/>
<protein>
    <recommendedName>
        <fullName evidence="1">Probable Dol-P-Man:Man(5)GlcNAc(2)-PP-Dol alpha-1,3-mannosyltransferase</fullName>
        <ecNumber evidence="1">2.4.1.258</ecNumber>
    </recommendedName>
    <alternativeName>
        <fullName>Asparagine-linked glycosylation protein 3 homolog</fullName>
    </alternativeName>
    <alternativeName>
        <fullName>Dol-P-Man-dependent alpha(1-3)-mannosyltransferase</fullName>
    </alternativeName>
    <alternativeName>
        <fullName>Dolichyl-phosphate-mannose--glycolipid alpha-mannosyltransferase</fullName>
    </alternativeName>
</protein>
<comment type="function">
    <text evidence="1">Dol-P-Man:Man(5)GlcNAc(2)-PP-Dol alpha-1,3-mannosyltransferase that operates in the biosynthetic pathway of dolichol-linked oligosaccharides, the glycan precursors employed in protein asparagine (N)-glycosylation. The assembly of dolichol-linked oligosaccharides begins on the cytosolic side of the endoplasmic reticulum membrane and finishes in its lumen. The sequential addition of sugars to dolichol pyrophosphate produces dolichol-linked oligosaccharides containing fourteen sugars, including two GlcNAcs, nine mannoses and three glucoses. Once assembled, the oligosaccharide is transferred from the lipid to nascent proteins by oligosaccharyltransferases. In the lumen of the endoplasmic reticulum, adds the first dolichyl beta-D-mannosyl phosphate derived mannose in an alpha-1,3 linkage to Man(5)GlcNAc(2)-PP-dolichol to produce Man(6)GlcNAc(2)-PP-dolichol.</text>
</comment>
<comment type="catalytic activity">
    <reaction evidence="1">
        <text>an alpha-D-Man-(1-&gt;2)-alpha-D-Man-(1-&gt;2)-alpha-D-Man-(1-&gt;3)-[alpha-D-Man-(1-&gt;6)]-beta-D-Man-(1-&gt;4)-beta-D-GlcNAc-(1-&gt;4)-alpha-D-GlcNAc-diphospho-di-trans,poly-cis-dolichol + a di-trans,poly-cis-dolichyl beta-D-mannosyl phosphate = an alpha-D-Man-(1-&gt;2)-alpha-D-Man-(1-&gt;2)-alpha-D-Man-(1-&gt;3)-[alpha-D-Man-(1-&gt;3)-alpha-D-Man-(1-&gt;6)]-beta-D-Man-(1-&gt;4)-beta-D-GlcNAc-(1-&gt;4)-alpha-D-GlcNAc-diphospho-di-trans,poly-cis-dolichol + a di-trans,poly-cis-dolichyl phosphate + H(+)</text>
        <dbReference type="Rhea" id="RHEA:29527"/>
        <dbReference type="Rhea" id="RHEA-COMP:19498"/>
        <dbReference type="Rhea" id="RHEA-COMP:19501"/>
        <dbReference type="Rhea" id="RHEA-COMP:19516"/>
        <dbReference type="Rhea" id="RHEA-COMP:19517"/>
        <dbReference type="ChEBI" id="CHEBI:15378"/>
        <dbReference type="ChEBI" id="CHEBI:57683"/>
        <dbReference type="ChEBI" id="CHEBI:58211"/>
        <dbReference type="ChEBI" id="CHEBI:132515"/>
        <dbReference type="ChEBI" id="CHEBI:132516"/>
        <dbReference type="EC" id="2.4.1.258"/>
    </reaction>
    <physiologicalReaction direction="left-to-right" evidence="1">
        <dbReference type="Rhea" id="RHEA:29528"/>
    </physiologicalReaction>
</comment>
<comment type="pathway">
    <text evidence="1">Protein modification; protein glycosylation.</text>
</comment>
<comment type="subcellular location">
    <subcellularLocation>
        <location evidence="1">Endoplasmic reticulum membrane</location>
        <topology evidence="2">Multi-pass membrane protein</topology>
    </subcellularLocation>
</comment>
<comment type="similarity">
    <text evidence="3">Belongs to the glycosyltransferase ALG3 family.</text>
</comment>
<accession>Q55F69</accession>
<evidence type="ECO:0000250" key="1">
    <source>
        <dbReference type="UniProtKB" id="P38179"/>
    </source>
</evidence>
<evidence type="ECO:0000255" key="2"/>
<evidence type="ECO:0000305" key="3"/>
<organism>
    <name type="scientific">Dictyostelium discoideum</name>
    <name type="common">Social amoeba</name>
    <dbReference type="NCBI Taxonomy" id="44689"/>
    <lineage>
        <taxon>Eukaryota</taxon>
        <taxon>Amoebozoa</taxon>
        <taxon>Evosea</taxon>
        <taxon>Eumycetozoa</taxon>
        <taxon>Dictyostelia</taxon>
        <taxon>Dictyosteliales</taxon>
        <taxon>Dictyosteliaceae</taxon>
        <taxon>Dictyostelium</taxon>
    </lineage>
</organism>
<keyword id="KW-0256">Endoplasmic reticulum</keyword>
<keyword id="KW-0328">Glycosyltransferase</keyword>
<keyword id="KW-0472">Membrane</keyword>
<keyword id="KW-1185">Reference proteome</keyword>
<keyword id="KW-0808">Transferase</keyword>
<keyword id="KW-0812">Transmembrane</keyword>
<keyword id="KW-1133">Transmembrane helix</keyword>
<sequence length="446" mass="52414">MIENKVLPFIKNNQIKCFYTLASFLMIYELCINKIIIDYVKYTEIDWSTYVQQVEVFLKGIYDYTKIEGDTGPCVYPAGHLYVFSLLYNLTENGLNILKAQYIFAAIYILLTFIVFSIYGESIKESIKQITNKSNNNNNNNNNNNNNNNNVFLKIPFYIIIFLCLSKRIHSIFALRMFNDCISMLLFYISLYLIIKGRWNLGCLFFSCSVSVKMNVLLYSPALLFLLLSTFGIWRTIPKLMICGLVQVLLAIPFLMVNPQGYLLRAFEFSRQFLYKWTVNWRFLPEHLFLNKSWALFLLSIHLLFIILFFIKYIKKEQGGISNILKRGSINQNPKLLSVNYILLIMFTINLIGVTFSRSLHYQFYLWYFHTLPFLLWSTNYNLFLKIGFMCITEYAWNTYPSTSTSSLMLFISNFILLIQLYFQPTINSLREDKNNSSGLKKKKTK</sequence>
<name>ALG3_DICDI</name>
<dbReference type="EC" id="2.4.1.258" evidence="1"/>
<dbReference type="EMBL" id="AAFI02000003">
    <property type="protein sequence ID" value="EAL73572.1"/>
    <property type="molecule type" value="Genomic_DNA"/>
</dbReference>
<dbReference type="RefSeq" id="XP_647664.1">
    <property type="nucleotide sequence ID" value="XM_642572.1"/>
</dbReference>
<dbReference type="SMR" id="Q55F69"/>
<dbReference type="FunCoup" id="Q55F69">
    <property type="interactions" value="797"/>
</dbReference>
<dbReference type="STRING" id="44689.Q55F69"/>
<dbReference type="PaxDb" id="44689-DDB0231368"/>
<dbReference type="EnsemblProtists" id="EAL73572">
    <property type="protein sequence ID" value="EAL73572"/>
    <property type="gene ID" value="DDB_G0268238"/>
</dbReference>
<dbReference type="GeneID" id="8616481"/>
<dbReference type="KEGG" id="ddi:DDB_G0268238"/>
<dbReference type="dictyBase" id="DDB_G0268238">
    <property type="gene designation" value="alg3"/>
</dbReference>
<dbReference type="VEuPathDB" id="AmoebaDB:DDB_G0268238"/>
<dbReference type="eggNOG" id="KOG2762">
    <property type="taxonomic scope" value="Eukaryota"/>
</dbReference>
<dbReference type="HOGENOM" id="CLU_035382_3_0_1"/>
<dbReference type="InParanoid" id="Q55F69"/>
<dbReference type="OMA" id="PERYGIH"/>
<dbReference type="PhylomeDB" id="Q55F69"/>
<dbReference type="Reactome" id="R-DDI-446193">
    <property type="pathway name" value="Biosynthesis of the N-glycan precursor (dolichol lipid-linked oligosaccharide, LLO) and transfer to a nascent protein"/>
</dbReference>
<dbReference type="UniPathway" id="UPA00378"/>
<dbReference type="PRO" id="PR:Q55F69"/>
<dbReference type="Proteomes" id="UP000002195">
    <property type="component" value="Chromosome 1"/>
</dbReference>
<dbReference type="GO" id="GO:0005783">
    <property type="term" value="C:endoplasmic reticulum"/>
    <property type="evidence" value="ECO:0000250"/>
    <property type="project" value="dictyBase"/>
</dbReference>
<dbReference type="GO" id="GO:0005789">
    <property type="term" value="C:endoplasmic reticulum membrane"/>
    <property type="evidence" value="ECO:0007669"/>
    <property type="project" value="UniProtKB-SubCell"/>
</dbReference>
<dbReference type="GO" id="GO:0000033">
    <property type="term" value="F:alpha-1,3-mannosyltransferase activity"/>
    <property type="evidence" value="ECO:0000250"/>
    <property type="project" value="dictyBase"/>
</dbReference>
<dbReference type="GO" id="GO:0052925">
    <property type="term" value="F:dol-P-Man:Man(5)GlcNAc(2)-PP-Dol alpha-1,3-mannosyltransferase activity"/>
    <property type="evidence" value="ECO:0000318"/>
    <property type="project" value="GO_Central"/>
</dbReference>
<dbReference type="GO" id="GO:0006486">
    <property type="term" value="P:protein glycosylation"/>
    <property type="evidence" value="ECO:0000250"/>
    <property type="project" value="dictyBase"/>
</dbReference>
<dbReference type="InterPro" id="IPR007873">
    <property type="entry name" value="Glycosyltransferase_ALG3"/>
</dbReference>
<dbReference type="PANTHER" id="PTHR12646:SF0">
    <property type="entry name" value="DOL-P-MAN:MAN(5)GLCNAC(2)-PP-DOL ALPHA-1,3-MANNOSYLTRANSFERASE"/>
    <property type="match status" value="1"/>
</dbReference>
<dbReference type="PANTHER" id="PTHR12646">
    <property type="entry name" value="NOT56 - RELATED"/>
    <property type="match status" value="1"/>
</dbReference>
<dbReference type="Pfam" id="PF05208">
    <property type="entry name" value="ALG3"/>
    <property type="match status" value="2"/>
</dbReference>